<evidence type="ECO:0000255" key="1">
    <source>
        <dbReference type="HAMAP-Rule" id="MF_01007"/>
    </source>
</evidence>
<feature type="chain" id="PRO_1000148838" description="Ribosomal RNA small subunit methyltransferase H">
    <location>
        <begin position="1"/>
        <end position="291"/>
    </location>
</feature>
<feature type="binding site" evidence="1">
    <location>
        <begin position="31"/>
        <end position="33"/>
    </location>
    <ligand>
        <name>S-adenosyl-L-methionine</name>
        <dbReference type="ChEBI" id="CHEBI:59789"/>
    </ligand>
</feature>
<feature type="binding site" evidence="1">
    <location>
        <position position="49"/>
    </location>
    <ligand>
        <name>S-adenosyl-L-methionine</name>
        <dbReference type="ChEBI" id="CHEBI:59789"/>
    </ligand>
</feature>
<feature type="binding site" evidence="1">
    <location>
        <position position="76"/>
    </location>
    <ligand>
        <name>S-adenosyl-L-methionine</name>
        <dbReference type="ChEBI" id="CHEBI:59789"/>
    </ligand>
</feature>
<feature type="binding site" evidence="1">
    <location>
        <position position="97"/>
    </location>
    <ligand>
        <name>S-adenosyl-L-methionine</name>
        <dbReference type="ChEBI" id="CHEBI:59789"/>
    </ligand>
</feature>
<feature type="binding site" evidence="1">
    <location>
        <position position="104"/>
    </location>
    <ligand>
        <name>S-adenosyl-L-methionine</name>
        <dbReference type="ChEBI" id="CHEBI:59789"/>
    </ligand>
</feature>
<gene>
    <name evidence="1" type="primary">rsmH</name>
    <name type="synonym">mraW</name>
    <name type="ordered locus">AMF_452</name>
</gene>
<dbReference type="EC" id="2.1.1.199" evidence="1"/>
<dbReference type="EMBL" id="CP001079">
    <property type="protein sequence ID" value="ACM49312.1"/>
    <property type="molecule type" value="Genomic_DNA"/>
</dbReference>
<dbReference type="RefSeq" id="WP_010267607.1">
    <property type="nucleotide sequence ID" value="NC_012026.1"/>
</dbReference>
<dbReference type="SMR" id="B9KIK0"/>
<dbReference type="STRING" id="320483.AMF_452"/>
<dbReference type="GeneID" id="7397992"/>
<dbReference type="KEGG" id="amf:AMF_452"/>
<dbReference type="PATRIC" id="fig|320483.3.peg.530"/>
<dbReference type="eggNOG" id="COG0275">
    <property type="taxonomic scope" value="Bacteria"/>
</dbReference>
<dbReference type="HOGENOM" id="CLU_038422_1_1_5"/>
<dbReference type="Proteomes" id="UP000007307">
    <property type="component" value="Chromosome"/>
</dbReference>
<dbReference type="GO" id="GO:0005737">
    <property type="term" value="C:cytoplasm"/>
    <property type="evidence" value="ECO:0007669"/>
    <property type="project" value="UniProtKB-SubCell"/>
</dbReference>
<dbReference type="GO" id="GO:0071424">
    <property type="term" value="F:rRNA (cytosine-N4-)-methyltransferase activity"/>
    <property type="evidence" value="ECO:0007669"/>
    <property type="project" value="UniProtKB-UniRule"/>
</dbReference>
<dbReference type="GO" id="GO:0070475">
    <property type="term" value="P:rRNA base methylation"/>
    <property type="evidence" value="ECO:0007669"/>
    <property type="project" value="UniProtKB-UniRule"/>
</dbReference>
<dbReference type="Gene3D" id="1.10.150.170">
    <property type="entry name" value="Putative methyltransferase TM0872, insert domain"/>
    <property type="match status" value="1"/>
</dbReference>
<dbReference type="Gene3D" id="3.40.50.150">
    <property type="entry name" value="Vaccinia Virus protein VP39"/>
    <property type="match status" value="1"/>
</dbReference>
<dbReference type="HAMAP" id="MF_01007">
    <property type="entry name" value="16SrRNA_methyltr_H"/>
    <property type="match status" value="1"/>
</dbReference>
<dbReference type="InterPro" id="IPR002903">
    <property type="entry name" value="RsmH"/>
</dbReference>
<dbReference type="InterPro" id="IPR023397">
    <property type="entry name" value="SAM-dep_MeTrfase_MraW_recog"/>
</dbReference>
<dbReference type="InterPro" id="IPR029063">
    <property type="entry name" value="SAM-dependent_MTases_sf"/>
</dbReference>
<dbReference type="NCBIfam" id="TIGR00006">
    <property type="entry name" value="16S rRNA (cytosine(1402)-N(4))-methyltransferase RsmH"/>
    <property type="match status" value="1"/>
</dbReference>
<dbReference type="PANTHER" id="PTHR11265:SF0">
    <property type="entry name" value="12S RRNA N4-METHYLCYTIDINE METHYLTRANSFERASE"/>
    <property type="match status" value="1"/>
</dbReference>
<dbReference type="PANTHER" id="PTHR11265">
    <property type="entry name" value="S-ADENOSYL-METHYLTRANSFERASE MRAW"/>
    <property type="match status" value="1"/>
</dbReference>
<dbReference type="Pfam" id="PF01795">
    <property type="entry name" value="Methyltransf_5"/>
    <property type="match status" value="1"/>
</dbReference>
<dbReference type="PIRSF" id="PIRSF004486">
    <property type="entry name" value="MraW"/>
    <property type="match status" value="1"/>
</dbReference>
<dbReference type="SUPFAM" id="SSF81799">
    <property type="entry name" value="Putative methyltransferase TM0872, insert domain"/>
    <property type="match status" value="1"/>
</dbReference>
<dbReference type="SUPFAM" id="SSF53335">
    <property type="entry name" value="S-adenosyl-L-methionine-dependent methyltransferases"/>
    <property type="match status" value="1"/>
</dbReference>
<proteinExistence type="inferred from homology"/>
<reference key="1">
    <citation type="journal article" date="2009" name="BMC Genomics">
        <title>Conservation in the face of diversity: multistrain analysis of an intracellular bacterium.</title>
        <authorList>
            <person name="Dark M.J."/>
            <person name="Herndon D.R."/>
            <person name="Kappmeyer L.S."/>
            <person name="Gonzales M.P."/>
            <person name="Nordeen E."/>
            <person name="Palmer G.H."/>
            <person name="Knowles D.P. Jr."/>
            <person name="Brayton K.A."/>
        </authorList>
    </citation>
    <scope>NUCLEOTIDE SEQUENCE [LARGE SCALE GENOMIC DNA]</scope>
    <source>
        <strain>Florida</strain>
    </source>
</reference>
<protein>
    <recommendedName>
        <fullName evidence="1">Ribosomal RNA small subunit methyltransferase H</fullName>
        <ecNumber evidence="1">2.1.1.199</ecNumber>
    </recommendedName>
    <alternativeName>
        <fullName evidence="1">16S rRNA m(4)C1402 methyltransferase</fullName>
    </alternativeName>
    <alternativeName>
        <fullName evidence="1">rRNA (cytosine-N(4)-)-methyltransferase RsmH</fullName>
    </alternativeName>
</protein>
<sequence length="291" mass="32365">MVHKPVLLNEVVEALSPKDGSVYVDATFGGGGYSRRILETAQCVVYAIDQDVVVKKYFDELLQSFPGRLNLAISRFSKLREVVLSFGVDKVDGVVFDLGTSAMQLADASRGFSFMNSGSLDMRMCSSALRDAAMFVNTVPEKEMADVIYQYGGERYSRRVARAIIDARRKCRINNTGDLATIIRSAVPRSRVHPIDPATRTFQAIRIWVNNELEELQAGLEAAAEVLKIGGKILVTSFHSLEDRVVKHKFRSLCDMGFSLINKKAIMPTDEEVKNNPRSRSGKLRAIARVE</sequence>
<organism>
    <name type="scientific">Anaplasma marginale (strain Florida)</name>
    <dbReference type="NCBI Taxonomy" id="320483"/>
    <lineage>
        <taxon>Bacteria</taxon>
        <taxon>Pseudomonadati</taxon>
        <taxon>Pseudomonadota</taxon>
        <taxon>Alphaproteobacteria</taxon>
        <taxon>Rickettsiales</taxon>
        <taxon>Anaplasmataceae</taxon>
        <taxon>Anaplasma</taxon>
    </lineage>
</organism>
<keyword id="KW-0963">Cytoplasm</keyword>
<keyword id="KW-0489">Methyltransferase</keyword>
<keyword id="KW-1185">Reference proteome</keyword>
<keyword id="KW-0698">rRNA processing</keyword>
<keyword id="KW-0949">S-adenosyl-L-methionine</keyword>
<keyword id="KW-0808">Transferase</keyword>
<accession>B9KIK0</accession>
<comment type="function">
    <text evidence="1">Specifically methylates the N4 position of cytidine in position 1402 (C1402) of 16S rRNA.</text>
</comment>
<comment type="catalytic activity">
    <reaction evidence="1">
        <text>cytidine(1402) in 16S rRNA + S-adenosyl-L-methionine = N(4)-methylcytidine(1402) in 16S rRNA + S-adenosyl-L-homocysteine + H(+)</text>
        <dbReference type="Rhea" id="RHEA:42928"/>
        <dbReference type="Rhea" id="RHEA-COMP:10286"/>
        <dbReference type="Rhea" id="RHEA-COMP:10287"/>
        <dbReference type="ChEBI" id="CHEBI:15378"/>
        <dbReference type="ChEBI" id="CHEBI:57856"/>
        <dbReference type="ChEBI" id="CHEBI:59789"/>
        <dbReference type="ChEBI" id="CHEBI:74506"/>
        <dbReference type="ChEBI" id="CHEBI:82748"/>
        <dbReference type="EC" id="2.1.1.199"/>
    </reaction>
</comment>
<comment type="subcellular location">
    <subcellularLocation>
        <location evidence="1">Cytoplasm</location>
    </subcellularLocation>
</comment>
<comment type="similarity">
    <text evidence="1">Belongs to the methyltransferase superfamily. RsmH family.</text>
</comment>
<name>RSMH_ANAMF</name>